<feature type="chain" id="PRO_0000175258" description="DNA-directed RNA polymerase subunit alpha">
    <location>
        <begin position="1"/>
        <end position="314"/>
    </location>
</feature>
<feature type="region of interest" description="Alpha N-terminal domain (alpha-NTD)" evidence="1">
    <location>
        <begin position="1"/>
        <end position="228"/>
    </location>
</feature>
<feature type="region of interest" description="Alpha C-terminal domain (alpha-CTD)" evidence="1">
    <location>
        <begin position="245"/>
        <end position="314"/>
    </location>
</feature>
<dbReference type="EC" id="2.7.7.6" evidence="1"/>
<dbReference type="EMBL" id="AE017194">
    <property type="protein sequence ID" value="AAS39073.1"/>
    <property type="molecule type" value="Genomic_DNA"/>
</dbReference>
<dbReference type="SMR" id="Q73F69"/>
<dbReference type="KEGG" id="bca:BCE_0137"/>
<dbReference type="HOGENOM" id="CLU_053084_0_1_9"/>
<dbReference type="Proteomes" id="UP000002527">
    <property type="component" value="Chromosome"/>
</dbReference>
<dbReference type="GO" id="GO:0005737">
    <property type="term" value="C:cytoplasm"/>
    <property type="evidence" value="ECO:0007669"/>
    <property type="project" value="UniProtKB-ARBA"/>
</dbReference>
<dbReference type="GO" id="GO:0000428">
    <property type="term" value="C:DNA-directed RNA polymerase complex"/>
    <property type="evidence" value="ECO:0007669"/>
    <property type="project" value="UniProtKB-KW"/>
</dbReference>
<dbReference type="GO" id="GO:0003677">
    <property type="term" value="F:DNA binding"/>
    <property type="evidence" value="ECO:0007669"/>
    <property type="project" value="UniProtKB-UniRule"/>
</dbReference>
<dbReference type="GO" id="GO:0003899">
    <property type="term" value="F:DNA-directed RNA polymerase activity"/>
    <property type="evidence" value="ECO:0007669"/>
    <property type="project" value="UniProtKB-UniRule"/>
</dbReference>
<dbReference type="GO" id="GO:0046983">
    <property type="term" value="F:protein dimerization activity"/>
    <property type="evidence" value="ECO:0007669"/>
    <property type="project" value="InterPro"/>
</dbReference>
<dbReference type="GO" id="GO:0006351">
    <property type="term" value="P:DNA-templated transcription"/>
    <property type="evidence" value="ECO:0007669"/>
    <property type="project" value="UniProtKB-UniRule"/>
</dbReference>
<dbReference type="CDD" id="cd06928">
    <property type="entry name" value="RNAP_alpha_NTD"/>
    <property type="match status" value="1"/>
</dbReference>
<dbReference type="FunFam" id="1.10.150.20:FF:000001">
    <property type="entry name" value="DNA-directed RNA polymerase subunit alpha"/>
    <property type="match status" value="1"/>
</dbReference>
<dbReference type="FunFam" id="2.170.120.12:FF:000001">
    <property type="entry name" value="DNA-directed RNA polymerase subunit alpha"/>
    <property type="match status" value="1"/>
</dbReference>
<dbReference type="Gene3D" id="1.10.150.20">
    <property type="entry name" value="5' to 3' exonuclease, C-terminal subdomain"/>
    <property type="match status" value="1"/>
</dbReference>
<dbReference type="Gene3D" id="2.170.120.12">
    <property type="entry name" value="DNA-directed RNA polymerase, insert domain"/>
    <property type="match status" value="1"/>
</dbReference>
<dbReference type="Gene3D" id="3.30.1360.10">
    <property type="entry name" value="RNA polymerase, RBP11-like subunit"/>
    <property type="match status" value="1"/>
</dbReference>
<dbReference type="HAMAP" id="MF_00059">
    <property type="entry name" value="RNApol_bact_RpoA"/>
    <property type="match status" value="1"/>
</dbReference>
<dbReference type="InterPro" id="IPR011262">
    <property type="entry name" value="DNA-dir_RNA_pol_insert"/>
</dbReference>
<dbReference type="InterPro" id="IPR011263">
    <property type="entry name" value="DNA-dir_RNA_pol_RpoA/D/Rpb3"/>
</dbReference>
<dbReference type="InterPro" id="IPR011773">
    <property type="entry name" value="DNA-dir_RpoA"/>
</dbReference>
<dbReference type="InterPro" id="IPR036603">
    <property type="entry name" value="RBP11-like"/>
</dbReference>
<dbReference type="InterPro" id="IPR011260">
    <property type="entry name" value="RNAP_asu_C"/>
</dbReference>
<dbReference type="InterPro" id="IPR036643">
    <property type="entry name" value="RNApol_insert_sf"/>
</dbReference>
<dbReference type="NCBIfam" id="NF003513">
    <property type="entry name" value="PRK05182.1-2"/>
    <property type="match status" value="1"/>
</dbReference>
<dbReference type="NCBIfam" id="NF003515">
    <property type="entry name" value="PRK05182.2-1"/>
    <property type="match status" value="1"/>
</dbReference>
<dbReference type="NCBIfam" id="NF003516">
    <property type="entry name" value="PRK05182.2-2"/>
    <property type="match status" value="1"/>
</dbReference>
<dbReference type="NCBIfam" id="NF003519">
    <property type="entry name" value="PRK05182.2-5"/>
    <property type="match status" value="1"/>
</dbReference>
<dbReference type="NCBIfam" id="TIGR02027">
    <property type="entry name" value="rpoA"/>
    <property type="match status" value="1"/>
</dbReference>
<dbReference type="Pfam" id="PF01000">
    <property type="entry name" value="RNA_pol_A_bac"/>
    <property type="match status" value="1"/>
</dbReference>
<dbReference type="Pfam" id="PF03118">
    <property type="entry name" value="RNA_pol_A_CTD"/>
    <property type="match status" value="1"/>
</dbReference>
<dbReference type="Pfam" id="PF01193">
    <property type="entry name" value="RNA_pol_L"/>
    <property type="match status" value="1"/>
</dbReference>
<dbReference type="SMART" id="SM00662">
    <property type="entry name" value="RPOLD"/>
    <property type="match status" value="1"/>
</dbReference>
<dbReference type="SUPFAM" id="SSF47789">
    <property type="entry name" value="C-terminal domain of RNA polymerase alpha subunit"/>
    <property type="match status" value="1"/>
</dbReference>
<dbReference type="SUPFAM" id="SSF56553">
    <property type="entry name" value="Insert subdomain of RNA polymerase alpha subunit"/>
    <property type="match status" value="1"/>
</dbReference>
<dbReference type="SUPFAM" id="SSF55257">
    <property type="entry name" value="RBP11-like subunits of RNA polymerase"/>
    <property type="match status" value="1"/>
</dbReference>
<accession>Q73F69</accession>
<keyword id="KW-0240">DNA-directed RNA polymerase</keyword>
<keyword id="KW-0548">Nucleotidyltransferase</keyword>
<keyword id="KW-0804">Transcription</keyword>
<keyword id="KW-0808">Transferase</keyword>
<comment type="function">
    <text evidence="1">DNA-dependent RNA polymerase catalyzes the transcription of DNA into RNA using the four ribonucleoside triphosphates as substrates.</text>
</comment>
<comment type="catalytic activity">
    <reaction evidence="1">
        <text>RNA(n) + a ribonucleoside 5'-triphosphate = RNA(n+1) + diphosphate</text>
        <dbReference type="Rhea" id="RHEA:21248"/>
        <dbReference type="Rhea" id="RHEA-COMP:14527"/>
        <dbReference type="Rhea" id="RHEA-COMP:17342"/>
        <dbReference type="ChEBI" id="CHEBI:33019"/>
        <dbReference type="ChEBI" id="CHEBI:61557"/>
        <dbReference type="ChEBI" id="CHEBI:140395"/>
        <dbReference type="EC" id="2.7.7.6"/>
    </reaction>
</comment>
<comment type="subunit">
    <text evidence="1">Homodimer. The RNAP catalytic core consists of 2 alpha, 1 beta, 1 beta' and 1 omega subunit. When a sigma factor is associated with the core the holoenzyme is formed, which can initiate transcription.</text>
</comment>
<comment type="domain">
    <text evidence="1">The N-terminal domain is essential for RNAP assembly and basal transcription, whereas the C-terminal domain is involved in interaction with transcriptional regulators and with upstream promoter elements.</text>
</comment>
<comment type="similarity">
    <text evidence="1">Belongs to the RNA polymerase alpha chain family.</text>
</comment>
<gene>
    <name evidence="1" type="primary">rpoA</name>
    <name type="ordered locus">BCE_0137</name>
</gene>
<evidence type="ECO:0000255" key="1">
    <source>
        <dbReference type="HAMAP-Rule" id="MF_00059"/>
    </source>
</evidence>
<organism>
    <name type="scientific">Bacillus cereus (strain ATCC 10987 / NRS 248)</name>
    <dbReference type="NCBI Taxonomy" id="222523"/>
    <lineage>
        <taxon>Bacteria</taxon>
        <taxon>Bacillati</taxon>
        <taxon>Bacillota</taxon>
        <taxon>Bacilli</taxon>
        <taxon>Bacillales</taxon>
        <taxon>Bacillaceae</taxon>
        <taxon>Bacillus</taxon>
        <taxon>Bacillus cereus group</taxon>
    </lineage>
</organism>
<protein>
    <recommendedName>
        <fullName evidence="1">DNA-directed RNA polymerase subunit alpha</fullName>
        <shortName evidence="1">RNAP subunit alpha</shortName>
        <ecNumber evidence="1">2.7.7.6</ecNumber>
    </recommendedName>
    <alternativeName>
        <fullName evidence="1">RNA polymerase subunit alpha</fullName>
    </alternativeName>
    <alternativeName>
        <fullName evidence="1">Transcriptase subunit alpha</fullName>
    </alternativeName>
</protein>
<sequence length="314" mass="34936">MIEIEKPKIETVELNEDAKYGKFVIEPLERGYGTTLGNSLRRILLSSLPGAAVTAIQIDGVLHEFSTVEGVVEDVTTIILNLKKLALKIYSEEEKTLEIDVQGEGIVTAADITHDSDVEILNPDLHIATLAKDAHFRVRLTAKRGRGYTPADANKSEDQPIGVIPIDSIYTPVSRVTYQVEKTRVGQVANYDKLTLDVWTDGSIGPKEAISLGAKILTEHLNIFVGLTDEAQNAEIMVEKEEDQKEKVLEMTIEELDLSVRSYNCLKRAGINTVQELANKTEEDMMKVRNLGRKSLEEVKHKLEELGLGLRKDD</sequence>
<name>RPOA_BACC1</name>
<reference key="1">
    <citation type="journal article" date="2004" name="Nucleic Acids Res.">
        <title>The genome sequence of Bacillus cereus ATCC 10987 reveals metabolic adaptations and a large plasmid related to Bacillus anthracis pXO1.</title>
        <authorList>
            <person name="Rasko D.A."/>
            <person name="Ravel J."/>
            <person name="Oekstad O.A."/>
            <person name="Helgason E."/>
            <person name="Cer R.Z."/>
            <person name="Jiang L."/>
            <person name="Shores K.A."/>
            <person name="Fouts D.E."/>
            <person name="Tourasse N.J."/>
            <person name="Angiuoli S.V."/>
            <person name="Kolonay J.F."/>
            <person name="Nelson W.C."/>
            <person name="Kolstoe A.-B."/>
            <person name="Fraser C.M."/>
            <person name="Read T.D."/>
        </authorList>
    </citation>
    <scope>NUCLEOTIDE SEQUENCE [LARGE SCALE GENOMIC DNA]</scope>
    <source>
        <strain>ATCC 10987 / NRS 248</strain>
    </source>
</reference>
<proteinExistence type="inferred from homology"/>